<keyword id="KW-0204">Cytolysis</keyword>
<keyword id="KW-0903">Direct protein sequencing</keyword>
<keyword id="KW-0964">Secreted</keyword>
<reference key="1">
    <citation type="journal article" date="2024" name="J. Nat. Prod.">
        <title>Profiling the linear peptides of venom from the Brazilian scorpion Tityus serrulatus: structural and functional characterization.</title>
        <authorList>
            <person name="Dias N.B."/>
            <person name="de Souza B.M."/>
            <person name="Cid-Alda F."/>
            <person name="Dorce V.A.C."/>
            <person name="Cocchi F.K."/>
            <person name="Palma M.S."/>
        </authorList>
    </citation>
    <scope>PROTEIN SEQUENCE</scope>
    <scope>IDENTIFICATION BY MASS SPECTROMETRY</scope>
    <scope>MASS SPECTROMETRY</scope>
    <scope>SUBCELLULAR LOCATION</scope>
    <scope>SYNTHESIS</scope>
    <scope>FUNCTION</scope>
    <source>
        <tissue>Venom</tissue>
    </source>
</reference>
<accession>P0DRE1</accession>
<dbReference type="GO" id="GO:0005576">
    <property type="term" value="C:extracellular region"/>
    <property type="evidence" value="ECO:0007669"/>
    <property type="project" value="UniProtKB-SubCell"/>
</dbReference>
<dbReference type="GO" id="GO:0031640">
    <property type="term" value="P:killing of cells of another organism"/>
    <property type="evidence" value="ECO:0007669"/>
    <property type="project" value="UniProtKB-KW"/>
</dbReference>
<protein>
    <recommendedName>
        <fullName evidence="2">Cryptide TyPep-9</fullName>
    </recommendedName>
</protein>
<name>CRY9_TITSE</name>
<organism>
    <name type="scientific">Tityus serrulatus</name>
    <name type="common">Brazilian scorpion</name>
    <dbReference type="NCBI Taxonomy" id="6887"/>
    <lineage>
        <taxon>Eukaryota</taxon>
        <taxon>Metazoa</taxon>
        <taxon>Ecdysozoa</taxon>
        <taxon>Arthropoda</taxon>
        <taxon>Chelicerata</taxon>
        <taxon>Arachnida</taxon>
        <taxon>Scorpiones</taxon>
        <taxon>Buthida</taxon>
        <taxon>Buthoidea</taxon>
        <taxon>Buthidae</taxon>
        <taxon>Tityus</taxon>
    </lineage>
</organism>
<sequence length="8" mass="955">IPEDIIKK</sequence>
<feature type="peptide" id="PRO_0000461731" description="Cryptide TyPep-9" evidence="1">
    <location>
        <begin position="1"/>
        <end position="8"/>
    </location>
</feature>
<comment type="function">
    <text evidence="1">Causes weak hemolysis, mild mast cell degranulation, and small LDH release. Therefore, this peptide may be considered a weak cytolytic agent acting on mast cells, through two different mechanisms of interaction with the cells. The interaction with mast cells occurs through two different mechanisms: firstly, the peptide may bind to a G-protein coupled receptor (GPCR) related to the control of mast cell exocytosis, and secondly, it may cause a minor structural disorganization of the mast cell membrane. Does not have antimicrobial activity.</text>
</comment>
<comment type="subcellular location">
    <subcellularLocation>
        <location evidence="1">Secreted</location>
    </subcellularLocation>
</comment>
<comment type="tissue specificity">
    <text evidence="3">Expressed by the venom gland.</text>
</comment>
<comment type="mass spectrometry" mass="955.5" method="Electrospray" evidence="1"/>
<evidence type="ECO:0000269" key="1">
    <source>
    </source>
</evidence>
<evidence type="ECO:0000303" key="2">
    <source>
    </source>
</evidence>
<evidence type="ECO:0000305" key="3">
    <source>
    </source>
</evidence>
<proteinExistence type="evidence at protein level"/>